<organism>
    <name type="scientific">Citrobacter koseri (strain ATCC BAA-895 / CDC 4225-83 / SGSC4696)</name>
    <dbReference type="NCBI Taxonomy" id="290338"/>
    <lineage>
        <taxon>Bacteria</taxon>
        <taxon>Pseudomonadati</taxon>
        <taxon>Pseudomonadota</taxon>
        <taxon>Gammaproteobacteria</taxon>
        <taxon>Enterobacterales</taxon>
        <taxon>Enterobacteriaceae</taxon>
        <taxon>Citrobacter</taxon>
    </lineage>
</organism>
<evidence type="ECO:0000255" key="1">
    <source>
        <dbReference type="HAMAP-Rule" id="MF_00577"/>
    </source>
</evidence>
<accession>A8AJ16</accession>
<keyword id="KW-0963">Cytoplasm</keyword>
<keyword id="KW-0369">Histidine metabolism</keyword>
<keyword id="KW-0456">Lyase</keyword>
<keyword id="KW-0520">NAD</keyword>
<keyword id="KW-1185">Reference proteome</keyword>
<proteinExistence type="inferred from homology"/>
<reference key="1">
    <citation type="submission" date="2007-08" db="EMBL/GenBank/DDBJ databases">
        <authorList>
            <consortium name="The Citrobacter koseri Genome Sequencing Project"/>
            <person name="McClelland M."/>
            <person name="Sanderson E.K."/>
            <person name="Porwollik S."/>
            <person name="Spieth J."/>
            <person name="Clifton W.S."/>
            <person name="Latreille P."/>
            <person name="Courtney L."/>
            <person name="Wang C."/>
            <person name="Pepin K."/>
            <person name="Bhonagiri V."/>
            <person name="Nash W."/>
            <person name="Johnson M."/>
            <person name="Thiruvilangam P."/>
            <person name="Wilson R."/>
        </authorList>
    </citation>
    <scope>NUCLEOTIDE SEQUENCE [LARGE SCALE GENOMIC DNA]</scope>
    <source>
        <strain>ATCC BAA-895 / CDC 4225-83 / SGSC4696</strain>
    </source>
</reference>
<comment type="function">
    <text evidence="1">Catalyzes the conversion of urocanate to 4-imidazolone-5-propionate.</text>
</comment>
<comment type="catalytic activity">
    <reaction evidence="1">
        <text>4-imidazolone-5-propanoate = trans-urocanate + H2O</text>
        <dbReference type="Rhea" id="RHEA:13101"/>
        <dbReference type="ChEBI" id="CHEBI:15377"/>
        <dbReference type="ChEBI" id="CHEBI:17771"/>
        <dbReference type="ChEBI" id="CHEBI:77893"/>
        <dbReference type="EC" id="4.2.1.49"/>
    </reaction>
</comment>
<comment type="cofactor">
    <cofactor evidence="1">
        <name>NAD(+)</name>
        <dbReference type="ChEBI" id="CHEBI:57540"/>
    </cofactor>
    <text evidence="1">Binds 1 NAD(+) per subunit.</text>
</comment>
<comment type="pathway">
    <text evidence="1">Amino-acid degradation; L-histidine degradation into L-glutamate; N-formimidoyl-L-glutamate from L-histidine: step 2/3.</text>
</comment>
<comment type="subcellular location">
    <subcellularLocation>
        <location evidence="1">Cytoplasm</location>
    </subcellularLocation>
</comment>
<comment type="similarity">
    <text evidence="1">Belongs to the urocanase family.</text>
</comment>
<sequence length="561" mass="61387">MPQSKYRQQDIRAPRGTTLTAKSWLTEAPLRMLMNNLDPDVAENPHELVVYGGIGRAARDWECYDAIINALTKLEADETLLVQSGKPVGVFKTHENAPRVLIANSNLVPHWATWEHFNELDAKGLAMYGQMTAGSWIYIGSQGIVQGTYETFVEAGRQHYQGNLSGRWVLTAGLGGMGGAQPLAATLAGACSLNIECQQSRIDFRLRTRYVDEQATSLDDALARIEKYTREGKAVSVALCANAADVVPELVKRGVRPDLVTDQTSAHDPLHGYLPSGWRWEEYQAKAASDPQGTVQAAKRSMAKHVQAMLAFSEMGVPTFDYGNNIRQMAKEMGVENAFDFPGFVPAYIRPLFCRGIGPFRWVALSGDPEDIYKTDAKVKEIVADDKHLHHWLDMARERINFQGLPARICWVGLAWRQKLGLAFNEMVRRGEVSAPIVIGRDHLDSGSVASPNRETEAMRDGSDAVSDWPLLNALLNTASGATWVSLHHGGGVGMGFSQHAGMVIVCDGTDEAAARIARVLHNDPATGVMRHADAGYEIAVECAAEQGLNLPMIAATQGKR</sequence>
<feature type="chain" id="PRO_1000025127" description="Urocanate hydratase">
    <location>
        <begin position="1"/>
        <end position="561"/>
    </location>
</feature>
<feature type="active site" evidence="1">
    <location>
        <position position="410"/>
    </location>
</feature>
<feature type="binding site" evidence="1">
    <location>
        <begin position="52"/>
        <end position="53"/>
    </location>
    <ligand>
        <name>NAD(+)</name>
        <dbReference type="ChEBI" id="CHEBI:57540"/>
    </ligand>
</feature>
<feature type="binding site" evidence="1">
    <location>
        <position position="130"/>
    </location>
    <ligand>
        <name>NAD(+)</name>
        <dbReference type="ChEBI" id="CHEBI:57540"/>
    </ligand>
</feature>
<feature type="binding site" evidence="1">
    <location>
        <begin position="176"/>
        <end position="178"/>
    </location>
    <ligand>
        <name>NAD(+)</name>
        <dbReference type="ChEBI" id="CHEBI:57540"/>
    </ligand>
</feature>
<feature type="binding site" evidence="1">
    <location>
        <position position="196"/>
    </location>
    <ligand>
        <name>NAD(+)</name>
        <dbReference type="ChEBI" id="CHEBI:57540"/>
    </ligand>
</feature>
<feature type="binding site" evidence="1">
    <location>
        <position position="201"/>
    </location>
    <ligand>
        <name>NAD(+)</name>
        <dbReference type="ChEBI" id="CHEBI:57540"/>
    </ligand>
</feature>
<feature type="binding site" evidence="1">
    <location>
        <begin position="242"/>
        <end position="243"/>
    </location>
    <ligand>
        <name>NAD(+)</name>
        <dbReference type="ChEBI" id="CHEBI:57540"/>
    </ligand>
</feature>
<feature type="binding site" evidence="1">
    <location>
        <begin position="263"/>
        <end position="267"/>
    </location>
    <ligand>
        <name>NAD(+)</name>
        <dbReference type="ChEBI" id="CHEBI:57540"/>
    </ligand>
</feature>
<feature type="binding site" evidence="1">
    <location>
        <begin position="273"/>
        <end position="274"/>
    </location>
    <ligand>
        <name>NAD(+)</name>
        <dbReference type="ChEBI" id="CHEBI:57540"/>
    </ligand>
</feature>
<feature type="binding site" evidence="1">
    <location>
        <position position="322"/>
    </location>
    <ligand>
        <name>NAD(+)</name>
        <dbReference type="ChEBI" id="CHEBI:57540"/>
    </ligand>
</feature>
<feature type="binding site" evidence="1">
    <location>
        <position position="492"/>
    </location>
    <ligand>
        <name>NAD(+)</name>
        <dbReference type="ChEBI" id="CHEBI:57540"/>
    </ligand>
</feature>
<gene>
    <name evidence="1" type="primary">hutU</name>
    <name type="ordered locus">CKO_02357</name>
</gene>
<protein>
    <recommendedName>
        <fullName evidence="1">Urocanate hydratase</fullName>
        <shortName evidence="1">Urocanase</shortName>
        <ecNumber evidence="1">4.2.1.49</ecNumber>
    </recommendedName>
    <alternativeName>
        <fullName evidence="1">Imidazolonepropionate hydrolase</fullName>
    </alternativeName>
</protein>
<name>HUTU_CITK8</name>
<dbReference type="EC" id="4.2.1.49" evidence="1"/>
<dbReference type="EMBL" id="CP000822">
    <property type="protein sequence ID" value="ABV13479.1"/>
    <property type="molecule type" value="Genomic_DNA"/>
</dbReference>
<dbReference type="RefSeq" id="WP_012133206.1">
    <property type="nucleotide sequence ID" value="NC_009792.1"/>
</dbReference>
<dbReference type="SMR" id="A8AJ16"/>
<dbReference type="STRING" id="290338.CKO_02357"/>
<dbReference type="GeneID" id="45136260"/>
<dbReference type="KEGG" id="cko:CKO_02357"/>
<dbReference type="HOGENOM" id="CLU_018868_0_1_6"/>
<dbReference type="OrthoDB" id="9764874at2"/>
<dbReference type="UniPathway" id="UPA00379">
    <property type="reaction ID" value="UER00550"/>
</dbReference>
<dbReference type="Proteomes" id="UP000008148">
    <property type="component" value="Chromosome"/>
</dbReference>
<dbReference type="GO" id="GO:0005737">
    <property type="term" value="C:cytoplasm"/>
    <property type="evidence" value="ECO:0007669"/>
    <property type="project" value="UniProtKB-SubCell"/>
</dbReference>
<dbReference type="GO" id="GO:0016153">
    <property type="term" value="F:urocanate hydratase activity"/>
    <property type="evidence" value="ECO:0007669"/>
    <property type="project" value="UniProtKB-UniRule"/>
</dbReference>
<dbReference type="GO" id="GO:0019556">
    <property type="term" value="P:L-histidine catabolic process to glutamate and formamide"/>
    <property type="evidence" value="ECO:0007669"/>
    <property type="project" value="UniProtKB-UniPathway"/>
</dbReference>
<dbReference type="GO" id="GO:0019557">
    <property type="term" value="P:L-histidine catabolic process to glutamate and formate"/>
    <property type="evidence" value="ECO:0007669"/>
    <property type="project" value="UniProtKB-UniPathway"/>
</dbReference>
<dbReference type="FunFam" id="3.40.50.10730:FF:000001">
    <property type="entry name" value="Urocanate hydratase"/>
    <property type="match status" value="1"/>
</dbReference>
<dbReference type="Gene3D" id="3.40.50.10730">
    <property type="entry name" value="Urocanase like domains"/>
    <property type="match status" value="1"/>
</dbReference>
<dbReference type="Gene3D" id="3.40.1770.10">
    <property type="entry name" value="Urocanase superfamily"/>
    <property type="match status" value="1"/>
</dbReference>
<dbReference type="HAMAP" id="MF_00577">
    <property type="entry name" value="HutU"/>
    <property type="match status" value="1"/>
</dbReference>
<dbReference type="InterPro" id="IPR055351">
    <property type="entry name" value="Urocanase"/>
</dbReference>
<dbReference type="InterPro" id="IPR023637">
    <property type="entry name" value="Urocanase-like"/>
</dbReference>
<dbReference type="InterPro" id="IPR035401">
    <property type="entry name" value="Urocanase_C"/>
</dbReference>
<dbReference type="InterPro" id="IPR038364">
    <property type="entry name" value="Urocanase_central_sf"/>
</dbReference>
<dbReference type="InterPro" id="IPR023636">
    <property type="entry name" value="Urocanase_CS"/>
</dbReference>
<dbReference type="InterPro" id="IPR035400">
    <property type="entry name" value="Urocanase_N"/>
</dbReference>
<dbReference type="InterPro" id="IPR035085">
    <property type="entry name" value="Urocanase_Rossmann-like"/>
</dbReference>
<dbReference type="InterPro" id="IPR036190">
    <property type="entry name" value="Urocanase_sf"/>
</dbReference>
<dbReference type="NCBIfam" id="TIGR01228">
    <property type="entry name" value="hutU"/>
    <property type="match status" value="1"/>
</dbReference>
<dbReference type="NCBIfam" id="NF003820">
    <property type="entry name" value="PRK05414.1"/>
    <property type="match status" value="1"/>
</dbReference>
<dbReference type="PANTHER" id="PTHR12216">
    <property type="entry name" value="UROCANATE HYDRATASE"/>
    <property type="match status" value="1"/>
</dbReference>
<dbReference type="PANTHER" id="PTHR12216:SF4">
    <property type="entry name" value="UROCANATE HYDRATASE"/>
    <property type="match status" value="1"/>
</dbReference>
<dbReference type="Pfam" id="PF01175">
    <property type="entry name" value="Urocanase"/>
    <property type="match status" value="1"/>
</dbReference>
<dbReference type="Pfam" id="PF17392">
    <property type="entry name" value="Urocanase_C"/>
    <property type="match status" value="1"/>
</dbReference>
<dbReference type="Pfam" id="PF17391">
    <property type="entry name" value="Urocanase_N"/>
    <property type="match status" value="1"/>
</dbReference>
<dbReference type="PIRSF" id="PIRSF001423">
    <property type="entry name" value="Urocanate_hydrat"/>
    <property type="match status" value="1"/>
</dbReference>
<dbReference type="SUPFAM" id="SSF111326">
    <property type="entry name" value="Urocanase"/>
    <property type="match status" value="1"/>
</dbReference>
<dbReference type="PROSITE" id="PS01233">
    <property type="entry name" value="UROCANASE"/>
    <property type="match status" value="1"/>
</dbReference>